<protein>
    <recommendedName>
        <fullName evidence="1">Cytidine deaminase</fullName>
        <ecNumber evidence="1">3.5.4.5</ecNumber>
    </recommendedName>
    <alternativeName>
        <fullName evidence="1">Cytidine aminohydrolase</fullName>
        <shortName evidence="1">CDA</shortName>
    </alternativeName>
</protein>
<gene>
    <name evidence="1" type="primary">cdd</name>
    <name type="ordered locus">SF2228</name>
    <name type="ordered locus">S2357</name>
</gene>
<dbReference type="EC" id="3.5.4.5" evidence="1"/>
<dbReference type="EMBL" id="AE005674">
    <property type="protein sequence ID" value="AAN43750.1"/>
    <property type="molecule type" value="Genomic_DNA"/>
</dbReference>
<dbReference type="EMBL" id="AE014073">
    <property type="protein sequence ID" value="AAP17567.1"/>
    <property type="molecule type" value="Genomic_DNA"/>
</dbReference>
<dbReference type="RefSeq" id="NP_708043.1">
    <property type="nucleotide sequence ID" value="NC_004337.2"/>
</dbReference>
<dbReference type="RefSeq" id="WP_000553555.1">
    <property type="nucleotide sequence ID" value="NZ_WPGW01000017.1"/>
</dbReference>
<dbReference type="SMR" id="P0ABF7"/>
<dbReference type="STRING" id="198214.SF2228"/>
<dbReference type="PaxDb" id="198214-SF2228"/>
<dbReference type="GeneID" id="1025385"/>
<dbReference type="GeneID" id="93775039"/>
<dbReference type="KEGG" id="sfl:SF2228"/>
<dbReference type="KEGG" id="sfx:S2357"/>
<dbReference type="PATRIC" id="fig|198214.7.peg.2669"/>
<dbReference type="HOGENOM" id="CLU_052424_0_0_6"/>
<dbReference type="Proteomes" id="UP000001006">
    <property type="component" value="Chromosome"/>
</dbReference>
<dbReference type="Proteomes" id="UP000002673">
    <property type="component" value="Chromosome"/>
</dbReference>
<dbReference type="GO" id="GO:0005829">
    <property type="term" value="C:cytosol"/>
    <property type="evidence" value="ECO:0007669"/>
    <property type="project" value="TreeGrafter"/>
</dbReference>
<dbReference type="GO" id="GO:0004126">
    <property type="term" value="F:cytidine deaminase activity"/>
    <property type="evidence" value="ECO:0007669"/>
    <property type="project" value="UniProtKB-UniRule"/>
</dbReference>
<dbReference type="GO" id="GO:0042802">
    <property type="term" value="F:identical protein binding"/>
    <property type="evidence" value="ECO:0007669"/>
    <property type="project" value="UniProtKB-ARBA"/>
</dbReference>
<dbReference type="GO" id="GO:0008270">
    <property type="term" value="F:zinc ion binding"/>
    <property type="evidence" value="ECO:0007669"/>
    <property type="project" value="UniProtKB-UniRule"/>
</dbReference>
<dbReference type="GO" id="GO:0009972">
    <property type="term" value="P:cytidine deamination"/>
    <property type="evidence" value="ECO:0007669"/>
    <property type="project" value="InterPro"/>
</dbReference>
<dbReference type="CDD" id="cd01283">
    <property type="entry name" value="cytidine_deaminase"/>
    <property type="match status" value="2"/>
</dbReference>
<dbReference type="FunFam" id="3.40.140.10:FF:000006">
    <property type="entry name" value="Cytidine deaminase"/>
    <property type="match status" value="1"/>
</dbReference>
<dbReference type="FunFam" id="3.40.140.10:FF:000007">
    <property type="entry name" value="Cytidine deaminase"/>
    <property type="match status" value="1"/>
</dbReference>
<dbReference type="Gene3D" id="3.40.140.10">
    <property type="entry name" value="Cytidine Deaminase, domain 2"/>
    <property type="match status" value="2"/>
</dbReference>
<dbReference type="HAMAP" id="MF_01558">
    <property type="entry name" value="Cyt_deam"/>
    <property type="match status" value="1"/>
</dbReference>
<dbReference type="InterPro" id="IPR016192">
    <property type="entry name" value="APOBEC/CMP_deaminase_Zn-bd"/>
</dbReference>
<dbReference type="InterPro" id="IPR002125">
    <property type="entry name" value="CMP_dCMP_dom"/>
</dbReference>
<dbReference type="InterPro" id="IPR013171">
    <property type="entry name" value="Cyd/dCyd_deaminase_Zn-bd"/>
</dbReference>
<dbReference type="InterPro" id="IPR050202">
    <property type="entry name" value="Cyt/Deoxycyt_deaminase"/>
</dbReference>
<dbReference type="InterPro" id="IPR006263">
    <property type="entry name" value="Cyt_deam_dimer"/>
</dbReference>
<dbReference type="InterPro" id="IPR016193">
    <property type="entry name" value="Cytidine_deaminase-like"/>
</dbReference>
<dbReference type="InterPro" id="IPR020797">
    <property type="entry name" value="Cytidine_deaminase_bacteria"/>
</dbReference>
<dbReference type="NCBIfam" id="TIGR01355">
    <property type="entry name" value="cyt_deam_dimer"/>
    <property type="match status" value="1"/>
</dbReference>
<dbReference type="NCBIfam" id="NF006537">
    <property type="entry name" value="PRK09027.1"/>
    <property type="match status" value="1"/>
</dbReference>
<dbReference type="PANTHER" id="PTHR11644">
    <property type="entry name" value="CYTIDINE DEAMINASE"/>
    <property type="match status" value="1"/>
</dbReference>
<dbReference type="PANTHER" id="PTHR11644:SF2">
    <property type="entry name" value="CYTIDINE DEAMINASE"/>
    <property type="match status" value="1"/>
</dbReference>
<dbReference type="Pfam" id="PF00383">
    <property type="entry name" value="dCMP_cyt_deam_1"/>
    <property type="match status" value="1"/>
</dbReference>
<dbReference type="Pfam" id="PF08211">
    <property type="entry name" value="dCMP_cyt_deam_2"/>
    <property type="match status" value="1"/>
</dbReference>
<dbReference type="PIRSF" id="PIRSF006334">
    <property type="entry name" value="Cdd_plus_pseudo"/>
    <property type="match status" value="1"/>
</dbReference>
<dbReference type="SUPFAM" id="SSF53927">
    <property type="entry name" value="Cytidine deaminase-like"/>
    <property type="match status" value="2"/>
</dbReference>
<dbReference type="PROSITE" id="PS00903">
    <property type="entry name" value="CYT_DCMP_DEAMINASES_1"/>
    <property type="match status" value="1"/>
</dbReference>
<dbReference type="PROSITE" id="PS51747">
    <property type="entry name" value="CYT_DCMP_DEAMINASES_2"/>
    <property type="match status" value="2"/>
</dbReference>
<sequence length="294" mass="31540">MHPRFQTAFAQLADNLQSALEPILADKYFPALLTGEQVSSLKSATGLDEDALAFALLPLAAACARTPLSNFNVGAIARGVSGTWYFGANMEFIGATMQQTVHAEQSAISHAWLSGEKALAAITVNYTPCGHCRQFMNELNSGLDLRIHLPGREAHALRDYLPDAFGPKDLEIKTLLMDEQDHGYALTGDALSQAAIAAANRSHMPYSKSPSGVALECKDGRIFSGSYAENAAFNPTLPPLQGALILLNLKGYDYPDIQRAVLAEKADAPLIQWDATSATLKALGCHSIDRVLLA</sequence>
<name>CDD_SHIFL</name>
<evidence type="ECO:0000255" key="1">
    <source>
        <dbReference type="HAMAP-Rule" id="MF_01558"/>
    </source>
</evidence>
<evidence type="ECO:0000255" key="2">
    <source>
        <dbReference type="PROSITE-ProRule" id="PRU01083"/>
    </source>
</evidence>
<keyword id="KW-0378">Hydrolase</keyword>
<keyword id="KW-0479">Metal-binding</keyword>
<keyword id="KW-1185">Reference proteome</keyword>
<keyword id="KW-0862">Zinc</keyword>
<organism>
    <name type="scientific">Shigella flexneri</name>
    <dbReference type="NCBI Taxonomy" id="623"/>
    <lineage>
        <taxon>Bacteria</taxon>
        <taxon>Pseudomonadati</taxon>
        <taxon>Pseudomonadota</taxon>
        <taxon>Gammaproteobacteria</taxon>
        <taxon>Enterobacterales</taxon>
        <taxon>Enterobacteriaceae</taxon>
        <taxon>Shigella</taxon>
    </lineage>
</organism>
<reference key="1">
    <citation type="journal article" date="2002" name="Nucleic Acids Res.">
        <title>Genome sequence of Shigella flexneri 2a: insights into pathogenicity through comparison with genomes of Escherichia coli K12 and O157.</title>
        <authorList>
            <person name="Jin Q."/>
            <person name="Yuan Z."/>
            <person name="Xu J."/>
            <person name="Wang Y."/>
            <person name="Shen Y."/>
            <person name="Lu W."/>
            <person name="Wang J."/>
            <person name="Liu H."/>
            <person name="Yang J."/>
            <person name="Yang F."/>
            <person name="Zhang X."/>
            <person name="Zhang J."/>
            <person name="Yang G."/>
            <person name="Wu H."/>
            <person name="Qu D."/>
            <person name="Dong J."/>
            <person name="Sun L."/>
            <person name="Xue Y."/>
            <person name="Zhao A."/>
            <person name="Gao Y."/>
            <person name="Zhu J."/>
            <person name="Kan B."/>
            <person name="Ding K."/>
            <person name="Chen S."/>
            <person name="Cheng H."/>
            <person name="Yao Z."/>
            <person name="He B."/>
            <person name="Chen R."/>
            <person name="Ma D."/>
            <person name="Qiang B."/>
            <person name="Wen Y."/>
            <person name="Hou Y."/>
            <person name="Yu J."/>
        </authorList>
    </citation>
    <scope>NUCLEOTIDE SEQUENCE [LARGE SCALE GENOMIC DNA]</scope>
    <source>
        <strain>301 / Serotype 2a</strain>
    </source>
</reference>
<reference key="2">
    <citation type="journal article" date="2003" name="Infect. Immun.">
        <title>Complete genome sequence and comparative genomics of Shigella flexneri serotype 2a strain 2457T.</title>
        <authorList>
            <person name="Wei J."/>
            <person name="Goldberg M.B."/>
            <person name="Burland V."/>
            <person name="Venkatesan M.M."/>
            <person name="Deng W."/>
            <person name="Fournier G."/>
            <person name="Mayhew G.F."/>
            <person name="Plunkett G. III"/>
            <person name="Rose D.J."/>
            <person name="Darling A."/>
            <person name="Mau B."/>
            <person name="Perna N.T."/>
            <person name="Payne S.M."/>
            <person name="Runyen-Janecky L.J."/>
            <person name="Zhou S."/>
            <person name="Schwartz D.C."/>
            <person name="Blattner F.R."/>
        </authorList>
    </citation>
    <scope>NUCLEOTIDE SEQUENCE [LARGE SCALE GENOMIC DNA]</scope>
    <source>
        <strain>ATCC 700930 / 2457T / Serotype 2a</strain>
    </source>
</reference>
<comment type="function">
    <text evidence="1">This enzyme scavenges exogenous and endogenous cytidine and 2'-deoxycytidine for UMP synthesis.</text>
</comment>
<comment type="catalytic activity">
    <reaction evidence="1">
        <text>cytidine + H2O + H(+) = uridine + NH4(+)</text>
        <dbReference type="Rhea" id="RHEA:16069"/>
        <dbReference type="ChEBI" id="CHEBI:15377"/>
        <dbReference type="ChEBI" id="CHEBI:15378"/>
        <dbReference type="ChEBI" id="CHEBI:16704"/>
        <dbReference type="ChEBI" id="CHEBI:17562"/>
        <dbReference type="ChEBI" id="CHEBI:28938"/>
        <dbReference type="EC" id="3.5.4.5"/>
    </reaction>
</comment>
<comment type="catalytic activity">
    <reaction evidence="1">
        <text>2'-deoxycytidine + H2O + H(+) = 2'-deoxyuridine + NH4(+)</text>
        <dbReference type="Rhea" id="RHEA:13433"/>
        <dbReference type="ChEBI" id="CHEBI:15377"/>
        <dbReference type="ChEBI" id="CHEBI:15378"/>
        <dbReference type="ChEBI" id="CHEBI:15698"/>
        <dbReference type="ChEBI" id="CHEBI:16450"/>
        <dbReference type="ChEBI" id="CHEBI:28938"/>
        <dbReference type="EC" id="3.5.4.5"/>
    </reaction>
</comment>
<comment type="cofactor">
    <cofactor evidence="1">
        <name>Zn(2+)</name>
        <dbReference type="ChEBI" id="CHEBI:29105"/>
    </cofactor>
    <text evidence="1">Binds 1 zinc ion.</text>
</comment>
<comment type="subunit">
    <text evidence="1">Homodimer.</text>
</comment>
<comment type="similarity">
    <text evidence="1">Belongs to the cytidine and deoxycytidylate deaminase family.</text>
</comment>
<accession>P0ABF7</accession>
<accession>P13652</accession>
<proteinExistence type="inferred from homology"/>
<feature type="chain" id="PRO_0000171667" description="Cytidine deaminase">
    <location>
        <begin position="1"/>
        <end position="294"/>
    </location>
</feature>
<feature type="domain" description="CMP/dCMP-type deaminase 1" evidence="2">
    <location>
        <begin position="48"/>
        <end position="168"/>
    </location>
</feature>
<feature type="domain" description="CMP/dCMP-type deaminase 2" evidence="2">
    <location>
        <begin position="186"/>
        <end position="294"/>
    </location>
</feature>
<feature type="active site" description="Proton donor" evidence="1">
    <location>
        <position position="104"/>
    </location>
</feature>
<feature type="binding site" evidence="1">
    <location>
        <begin position="89"/>
        <end position="91"/>
    </location>
    <ligand>
        <name>substrate</name>
    </ligand>
</feature>
<feature type="binding site" evidence="1">
    <location>
        <position position="102"/>
    </location>
    <ligand>
        <name>Zn(2+)</name>
        <dbReference type="ChEBI" id="CHEBI:29105"/>
        <note>catalytic</note>
    </ligand>
</feature>
<feature type="binding site" evidence="1">
    <location>
        <position position="129"/>
    </location>
    <ligand>
        <name>Zn(2+)</name>
        <dbReference type="ChEBI" id="CHEBI:29105"/>
        <note>catalytic</note>
    </ligand>
</feature>
<feature type="binding site" evidence="1">
    <location>
        <position position="132"/>
    </location>
    <ligand>
        <name>Zn(2+)</name>
        <dbReference type="ChEBI" id="CHEBI:29105"/>
        <note>catalytic</note>
    </ligand>
</feature>